<name>OBG_DEIRA</name>
<reference key="1">
    <citation type="journal article" date="1999" name="Science">
        <title>Genome sequence of the radioresistant bacterium Deinococcus radiodurans R1.</title>
        <authorList>
            <person name="White O."/>
            <person name="Eisen J.A."/>
            <person name="Heidelberg J.F."/>
            <person name="Hickey E.K."/>
            <person name="Peterson J.D."/>
            <person name="Dodson R.J."/>
            <person name="Haft D.H."/>
            <person name="Gwinn M.L."/>
            <person name="Nelson W.C."/>
            <person name="Richardson D.L."/>
            <person name="Moffat K.S."/>
            <person name="Qin H."/>
            <person name="Jiang L."/>
            <person name="Pamphile W."/>
            <person name="Crosby M."/>
            <person name="Shen M."/>
            <person name="Vamathevan J.J."/>
            <person name="Lam P."/>
            <person name="McDonald L.A."/>
            <person name="Utterback T.R."/>
            <person name="Zalewski C."/>
            <person name="Makarova K.S."/>
            <person name="Aravind L."/>
            <person name="Daly M.J."/>
            <person name="Minton K.W."/>
            <person name="Fleischmann R.D."/>
            <person name="Ketchum K.A."/>
            <person name="Nelson K.E."/>
            <person name="Salzberg S.L."/>
            <person name="Smith H.O."/>
            <person name="Venter J.C."/>
            <person name="Fraser C.M."/>
        </authorList>
    </citation>
    <scope>NUCLEOTIDE SEQUENCE [LARGE SCALE GENOMIC DNA]</scope>
    <source>
        <strain>ATCC 13939 / DSM 20539 / JCM 16871 / CCUG 27074 / LMG 4051 / NBRC 15346 / NCIMB 9279 / VKM B-1422 / R1</strain>
    </source>
</reference>
<dbReference type="EC" id="3.6.5.-" evidence="1"/>
<dbReference type="EMBL" id="AE000513">
    <property type="protein sequence ID" value="AAF09676.1"/>
    <property type="molecule type" value="Genomic_DNA"/>
</dbReference>
<dbReference type="PIR" id="B75563">
    <property type="entry name" value="B75563"/>
</dbReference>
<dbReference type="RefSeq" id="NP_293810.1">
    <property type="nucleotide sequence ID" value="NC_001263.1"/>
</dbReference>
<dbReference type="RefSeq" id="WP_010886732.1">
    <property type="nucleotide sequence ID" value="NC_001263.1"/>
</dbReference>
<dbReference type="SMR" id="Q9RY66"/>
<dbReference type="FunCoup" id="Q9RY66">
    <property type="interactions" value="413"/>
</dbReference>
<dbReference type="STRING" id="243230.DR_0084"/>
<dbReference type="PaxDb" id="243230-DR_0084"/>
<dbReference type="EnsemblBacteria" id="AAF09676">
    <property type="protein sequence ID" value="AAF09676"/>
    <property type="gene ID" value="DR_0084"/>
</dbReference>
<dbReference type="GeneID" id="69516315"/>
<dbReference type="KEGG" id="dra:DR_0084"/>
<dbReference type="PATRIC" id="fig|243230.17.peg.248"/>
<dbReference type="eggNOG" id="COG0536">
    <property type="taxonomic scope" value="Bacteria"/>
</dbReference>
<dbReference type="HOGENOM" id="CLU_011747_2_1_0"/>
<dbReference type="InParanoid" id="Q9RY66"/>
<dbReference type="OrthoDB" id="9807318at2"/>
<dbReference type="Proteomes" id="UP000002524">
    <property type="component" value="Chromosome 1"/>
</dbReference>
<dbReference type="GO" id="GO:0005737">
    <property type="term" value="C:cytoplasm"/>
    <property type="evidence" value="ECO:0007669"/>
    <property type="project" value="UniProtKB-SubCell"/>
</dbReference>
<dbReference type="GO" id="GO:0005524">
    <property type="term" value="F:ATP binding"/>
    <property type="evidence" value="ECO:0007669"/>
    <property type="project" value="UniProtKB-KW"/>
</dbReference>
<dbReference type="GO" id="GO:0005525">
    <property type="term" value="F:GTP binding"/>
    <property type="evidence" value="ECO:0000318"/>
    <property type="project" value="GO_Central"/>
</dbReference>
<dbReference type="GO" id="GO:0003924">
    <property type="term" value="F:GTPase activity"/>
    <property type="evidence" value="ECO:0000318"/>
    <property type="project" value="GO_Central"/>
</dbReference>
<dbReference type="GO" id="GO:0000287">
    <property type="term" value="F:magnesium ion binding"/>
    <property type="evidence" value="ECO:0007669"/>
    <property type="project" value="InterPro"/>
</dbReference>
<dbReference type="GO" id="GO:0042254">
    <property type="term" value="P:ribosome biogenesis"/>
    <property type="evidence" value="ECO:0007669"/>
    <property type="project" value="UniProtKB-UniRule"/>
</dbReference>
<dbReference type="CDD" id="cd01898">
    <property type="entry name" value="Obg"/>
    <property type="match status" value="1"/>
</dbReference>
<dbReference type="FunFam" id="2.70.210.12:FF:000001">
    <property type="entry name" value="GTPase Obg"/>
    <property type="match status" value="1"/>
</dbReference>
<dbReference type="Gene3D" id="3.30.300.350">
    <property type="entry name" value="GTP-binding protein OBG, C-terminal domain"/>
    <property type="match status" value="1"/>
</dbReference>
<dbReference type="Gene3D" id="2.70.210.12">
    <property type="entry name" value="GTP1/OBG domain"/>
    <property type="match status" value="1"/>
</dbReference>
<dbReference type="Gene3D" id="3.40.50.300">
    <property type="entry name" value="P-loop containing nucleotide triphosphate hydrolases"/>
    <property type="match status" value="1"/>
</dbReference>
<dbReference type="HAMAP" id="MF_01454">
    <property type="entry name" value="GTPase_Obg"/>
    <property type="match status" value="1"/>
</dbReference>
<dbReference type="InterPro" id="IPR031167">
    <property type="entry name" value="G_OBG"/>
</dbReference>
<dbReference type="InterPro" id="IPR006073">
    <property type="entry name" value="GTP-bd"/>
</dbReference>
<dbReference type="InterPro" id="IPR014100">
    <property type="entry name" value="GTP-bd_Obg/CgtA"/>
</dbReference>
<dbReference type="InterPro" id="IPR036346">
    <property type="entry name" value="GTP-bd_prot_GTP1/OBG_C_sf"/>
</dbReference>
<dbReference type="InterPro" id="IPR006074">
    <property type="entry name" value="GTP1-OBG_CS"/>
</dbReference>
<dbReference type="InterPro" id="IPR006169">
    <property type="entry name" value="GTP1_OBG_dom"/>
</dbReference>
<dbReference type="InterPro" id="IPR036726">
    <property type="entry name" value="GTP1_OBG_dom_sf"/>
</dbReference>
<dbReference type="InterPro" id="IPR045086">
    <property type="entry name" value="OBG_GTPase"/>
</dbReference>
<dbReference type="InterPro" id="IPR015349">
    <property type="entry name" value="OCT_dom"/>
</dbReference>
<dbReference type="InterPro" id="IPR027417">
    <property type="entry name" value="P-loop_NTPase"/>
</dbReference>
<dbReference type="InterPro" id="IPR005225">
    <property type="entry name" value="Small_GTP-bd"/>
</dbReference>
<dbReference type="NCBIfam" id="TIGR02729">
    <property type="entry name" value="Obg_CgtA"/>
    <property type="match status" value="1"/>
</dbReference>
<dbReference type="NCBIfam" id="TIGR03595">
    <property type="entry name" value="Obg_CgtA_exten"/>
    <property type="match status" value="1"/>
</dbReference>
<dbReference type="NCBIfam" id="NF008954">
    <property type="entry name" value="PRK12296.1"/>
    <property type="match status" value="1"/>
</dbReference>
<dbReference type="NCBIfam" id="NF008955">
    <property type="entry name" value="PRK12297.1"/>
    <property type="match status" value="1"/>
</dbReference>
<dbReference type="NCBIfam" id="NF008956">
    <property type="entry name" value="PRK12299.1"/>
    <property type="match status" value="1"/>
</dbReference>
<dbReference type="NCBIfam" id="TIGR00231">
    <property type="entry name" value="small_GTP"/>
    <property type="match status" value="1"/>
</dbReference>
<dbReference type="PANTHER" id="PTHR11702">
    <property type="entry name" value="DEVELOPMENTALLY REGULATED GTP-BINDING PROTEIN-RELATED"/>
    <property type="match status" value="1"/>
</dbReference>
<dbReference type="PANTHER" id="PTHR11702:SF31">
    <property type="entry name" value="MITOCHONDRIAL RIBOSOME-ASSOCIATED GTPASE 2"/>
    <property type="match status" value="1"/>
</dbReference>
<dbReference type="Pfam" id="PF09269">
    <property type="entry name" value="DUF1967"/>
    <property type="match status" value="1"/>
</dbReference>
<dbReference type="Pfam" id="PF01018">
    <property type="entry name" value="GTP1_OBG"/>
    <property type="match status" value="1"/>
</dbReference>
<dbReference type="Pfam" id="PF01926">
    <property type="entry name" value="MMR_HSR1"/>
    <property type="match status" value="1"/>
</dbReference>
<dbReference type="PRINTS" id="PR00326">
    <property type="entry name" value="GTP1OBG"/>
</dbReference>
<dbReference type="SUPFAM" id="SSF102741">
    <property type="entry name" value="Obg GTP-binding protein C-terminal domain"/>
    <property type="match status" value="1"/>
</dbReference>
<dbReference type="SUPFAM" id="SSF82051">
    <property type="entry name" value="Obg GTP-binding protein N-terminal domain"/>
    <property type="match status" value="1"/>
</dbReference>
<dbReference type="SUPFAM" id="SSF52540">
    <property type="entry name" value="P-loop containing nucleoside triphosphate hydrolases"/>
    <property type="match status" value="1"/>
</dbReference>
<dbReference type="PROSITE" id="PS51710">
    <property type="entry name" value="G_OBG"/>
    <property type="match status" value="1"/>
</dbReference>
<dbReference type="PROSITE" id="PS00905">
    <property type="entry name" value="GTP1_OBG"/>
    <property type="match status" value="1"/>
</dbReference>
<dbReference type="PROSITE" id="PS51883">
    <property type="entry name" value="OBG"/>
    <property type="match status" value="1"/>
</dbReference>
<dbReference type="PROSITE" id="PS51881">
    <property type="entry name" value="OCT"/>
    <property type="match status" value="1"/>
</dbReference>
<accession>Q9RY66</accession>
<comment type="function">
    <text evidence="1">An essential GTPase which binds GTP, GDP and possibly (p)ppGpp with moderate affinity, with high nucleotide exchange rates and a fairly low GTP hydrolysis rate. Plays a role in control of the cell cycle, stress response, ribosome biogenesis and in those bacteria that undergo differentiation, in morphogenesis control.</text>
</comment>
<comment type="cofactor">
    <cofactor evidence="1">
        <name>Mg(2+)</name>
        <dbReference type="ChEBI" id="CHEBI:18420"/>
    </cofactor>
</comment>
<comment type="subunit">
    <text evidence="1">Monomer.</text>
</comment>
<comment type="subcellular location">
    <subcellularLocation>
        <location evidence="1">Cytoplasm</location>
    </subcellularLocation>
</comment>
<comment type="similarity">
    <text evidence="1">Belongs to the TRAFAC class OBG-HflX-like GTPase superfamily. OBG GTPase family.</text>
</comment>
<evidence type="ECO:0000255" key="1">
    <source>
        <dbReference type="HAMAP-Rule" id="MF_01454"/>
    </source>
</evidence>
<evidence type="ECO:0000255" key="2">
    <source>
        <dbReference type="PROSITE-ProRule" id="PRU01229"/>
    </source>
</evidence>
<evidence type="ECO:0000255" key="3">
    <source>
        <dbReference type="PROSITE-ProRule" id="PRU01231"/>
    </source>
</evidence>
<feature type="chain" id="PRO_0000385879" description="GTPase Obg">
    <location>
        <begin position="1"/>
        <end position="438"/>
    </location>
</feature>
<feature type="domain" description="Obg" evidence="3">
    <location>
        <begin position="1"/>
        <end position="159"/>
    </location>
</feature>
<feature type="domain" description="OBG-type G" evidence="1">
    <location>
        <begin position="160"/>
        <end position="332"/>
    </location>
</feature>
<feature type="domain" description="OCT" evidence="2">
    <location>
        <begin position="357"/>
        <end position="435"/>
    </location>
</feature>
<feature type="binding site" evidence="1">
    <location>
        <begin position="166"/>
        <end position="173"/>
    </location>
    <ligand>
        <name>ATP</name>
        <dbReference type="ChEBI" id="CHEBI:30616"/>
    </ligand>
</feature>
<feature type="binding site" evidence="1">
    <location>
        <position position="173"/>
    </location>
    <ligand>
        <name>Mg(2+)</name>
        <dbReference type="ChEBI" id="CHEBI:18420"/>
    </ligand>
</feature>
<feature type="binding site" evidence="1">
    <location>
        <begin position="191"/>
        <end position="195"/>
    </location>
    <ligand>
        <name>ATP</name>
        <dbReference type="ChEBI" id="CHEBI:30616"/>
    </ligand>
</feature>
<feature type="binding site" evidence="1">
    <location>
        <position position="193"/>
    </location>
    <ligand>
        <name>Mg(2+)</name>
        <dbReference type="ChEBI" id="CHEBI:18420"/>
    </ligand>
</feature>
<feature type="binding site" evidence="1">
    <location>
        <begin position="219"/>
        <end position="222"/>
    </location>
    <ligand>
        <name>ATP</name>
        <dbReference type="ChEBI" id="CHEBI:30616"/>
    </ligand>
</feature>
<feature type="binding site" evidence="1">
    <location>
        <begin position="285"/>
        <end position="288"/>
    </location>
    <ligand>
        <name>ATP</name>
        <dbReference type="ChEBI" id="CHEBI:30616"/>
    </ligand>
</feature>
<feature type="binding site" evidence="1">
    <location>
        <begin position="313"/>
        <end position="315"/>
    </location>
    <ligand>
        <name>ATP</name>
        <dbReference type="ChEBI" id="CHEBI:30616"/>
    </ligand>
</feature>
<sequence length="438" mass="47837">MAFRDVLNIEVAAGNGGDGSMSFHRAKYMEKGGPDGGHGGRGGSIILRAIEGVESLERLVGRRKFKAENGRYGEGRLRQGADGQDTYIDVPVGTTAFDEDSGKVIADLVNVGQEKVIAKGGLGGRGNSTFTSSTRQAPRFAELGTPGQKRRVRLELRLIADVGLVGYPNAGKSSLLAALSRANPAIADYPFTTLSPILGVVQREDEQGVSLDERFTMADIPGIIEGASEGKGLGLEFLRHISRTRLLVYVLDVTRNPVEELQQLQAELRAYDPSLLDNVALVALNKVELVEPDLAQMVEDELAEQGLPVLQVSAKEGTGLNTLRETLFQLLPEFELWAQSNALEVEPDTVVDEALQIVFREDAPAKGEGAPERVWEVHGGGFEERIVRFSRYLEDAAEYLGNLFKRQGLYNALRRAGAREGDTVEIGTFRFEYFDDEE</sequence>
<proteinExistence type="inferred from homology"/>
<organism>
    <name type="scientific">Deinococcus radiodurans (strain ATCC 13939 / DSM 20539 / JCM 16871 / CCUG 27074 / LMG 4051 / NBRC 15346 / NCIMB 9279 / VKM B-1422 / R1)</name>
    <dbReference type="NCBI Taxonomy" id="243230"/>
    <lineage>
        <taxon>Bacteria</taxon>
        <taxon>Thermotogati</taxon>
        <taxon>Deinococcota</taxon>
        <taxon>Deinococci</taxon>
        <taxon>Deinococcales</taxon>
        <taxon>Deinococcaceae</taxon>
        <taxon>Deinococcus</taxon>
    </lineage>
</organism>
<gene>
    <name evidence="1" type="primary">obg</name>
    <name type="ordered locus">DR_0084</name>
</gene>
<keyword id="KW-0067">ATP-binding</keyword>
<keyword id="KW-0963">Cytoplasm</keyword>
<keyword id="KW-0342">GTP-binding</keyword>
<keyword id="KW-0378">Hydrolase</keyword>
<keyword id="KW-0460">Magnesium</keyword>
<keyword id="KW-0479">Metal-binding</keyword>
<keyword id="KW-0547">Nucleotide-binding</keyword>
<keyword id="KW-1185">Reference proteome</keyword>
<protein>
    <recommendedName>
        <fullName evidence="1">GTPase Obg</fullName>
        <ecNumber evidence="1">3.6.5.-</ecNumber>
    </recommendedName>
    <alternativeName>
        <fullName evidence="1">GTP-binding protein Obg</fullName>
    </alternativeName>
</protein>